<keyword id="KW-0963">Cytoplasm</keyword>
<keyword id="KW-0329">Glyoxylate bypass</keyword>
<keyword id="KW-0460">Magnesium</keyword>
<keyword id="KW-0479">Metal-binding</keyword>
<keyword id="KW-0558">Oxidation</keyword>
<keyword id="KW-1185">Reference proteome</keyword>
<keyword id="KW-0808">Transferase</keyword>
<keyword id="KW-0816">Tricarboxylic acid cycle</keyword>
<sequence>METYEHVGNLQVATKLITFIEQRALPGTGIKKDDFWSGVQQIITELMPENKMLLAKREEIQATIDAWHQKNKGPIDFSAYHSFLEEIGYLEPIPEHVTITTENVDDEIAAQAGPQLVVPVNNARYAINAANARWGSLYDALYGSNVISEEDGCEKTGTYNPKRGTKVIQFAKDFLDHTFPLTSGSHHEAINYAIMDKQLVVTLESGKMTRLKDETQFVGYQGSQGDPSVILLLHHGLHVEIQIDARHPIGKSDRAKVKDIVLESALTTIMDCEDSVAAVDAEDKVAVYQNWLGLMKGTLEATFTKEGKTKKRKLNEDRSYTAPNGETFSLPGRSLMFVRNVGHLMTTPVIRTQSGEEVPEGILDGIVTSLIAKHDLLQNGTFRNSKKGSVYIVKPKMHGSEEVAFANRLFNRIEDILGLERHTLKIGVMDEERRTSLNLKACIEKVKERVVFINTGFLDRTGDEIHTSMEAGPMIRKGDMKSSSWLSAYERSNVAAGLTCGFQGRAQIGKGMWAMPDLMNEMMEQKGTQLEAGANTAWVPSPTAATLHAIHYHRHHVPAIQKTLADDQTCYRKEILEIPLAGSTDWTNEDIQAELNNNAQGILGYVVRWVEQGIGCSKVPDIHNTALMEDRATLRISSQHMANWLRHGIVSKEQVIRTMERMAKVVDEQNAGDPAYRPMADNLEQSVAFQAALELVLKGTEQPSGYTEPILHRRRLEFKQKIAKELV</sequence>
<proteinExistence type="inferred from homology"/>
<dbReference type="EC" id="2.3.3.9" evidence="1"/>
<dbReference type="EMBL" id="BA000004">
    <property type="protein sequence ID" value="BAB05852.1"/>
    <property type="molecule type" value="Genomic_DNA"/>
</dbReference>
<dbReference type="PIR" id="E83916">
    <property type="entry name" value="E83916"/>
</dbReference>
<dbReference type="RefSeq" id="WP_010898290.1">
    <property type="nucleotide sequence ID" value="NC_002570.2"/>
</dbReference>
<dbReference type="SMR" id="Q9KB03"/>
<dbReference type="STRING" id="272558.gene:10728031"/>
<dbReference type="KEGG" id="bha:BH2133"/>
<dbReference type="eggNOG" id="COG2225">
    <property type="taxonomic scope" value="Bacteria"/>
</dbReference>
<dbReference type="HOGENOM" id="CLU_028446_1_0_9"/>
<dbReference type="OrthoDB" id="9762054at2"/>
<dbReference type="UniPathway" id="UPA00703">
    <property type="reaction ID" value="UER00720"/>
</dbReference>
<dbReference type="Proteomes" id="UP000001258">
    <property type="component" value="Chromosome"/>
</dbReference>
<dbReference type="GO" id="GO:0005829">
    <property type="term" value="C:cytosol"/>
    <property type="evidence" value="ECO:0007669"/>
    <property type="project" value="TreeGrafter"/>
</dbReference>
<dbReference type="GO" id="GO:0000287">
    <property type="term" value="F:magnesium ion binding"/>
    <property type="evidence" value="ECO:0007669"/>
    <property type="project" value="TreeGrafter"/>
</dbReference>
<dbReference type="GO" id="GO:0004474">
    <property type="term" value="F:malate synthase activity"/>
    <property type="evidence" value="ECO:0007669"/>
    <property type="project" value="UniProtKB-UniRule"/>
</dbReference>
<dbReference type="GO" id="GO:0009436">
    <property type="term" value="P:glyoxylate catabolic process"/>
    <property type="evidence" value="ECO:0007669"/>
    <property type="project" value="TreeGrafter"/>
</dbReference>
<dbReference type="GO" id="GO:0006097">
    <property type="term" value="P:glyoxylate cycle"/>
    <property type="evidence" value="ECO:0007669"/>
    <property type="project" value="UniProtKB-UniRule"/>
</dbReference>
<dbReference type="GO" id="GO:0006099">
    <property type="term" value="P:tricarboxylic acid cycle"/>
    <property type="evidence" value="ECO:0007669"/>
    <property type="project" value="UniProtKB-KW"/>
</dbReference>
<dbReference type="Gene3D" id="3.20.20.360">
    <property type="entry name" value="Malate synthase, domain 3"/>
    <property type="match status" value="2"/>
</dbReference>
<dbReference type="Gene3D" id="1.20.1220.12">
    <property type="entry name" value="Malate synthase, domain III"/>
    <property type="match status" value="1"/>
</dbReference>
<dbReference type="HAMAP" id="MF_00641">
    <property type="entry name" value="Malate_synth_G"/>
    <property type="match status" value="1"/>
</dbReference>
<dbReference type="InterPro" id="IPR044856">
    <property type="entry name" value="Malate_synth_C_sf"/>
</dbReference>
<dbReference type="InterPro" id="IPR011076">
    <property type="entry name" value="Malate_synth_sf"/>
</dbReference>
<dbReference type="InterPro" id="IPR001465">
    <property type="entry name" value="Malate_synthase_TIM"/>
</dbReference>
<dbReference type="InterPro" id="IPR006253">
    <property type="entry name" value="Malate_synthG"/>
</dbReference>
<dbReference type="InterPro" id="IPR048355">
    <property type="entry name" value="MS_C"/>
</dbReference>
<dbReference type="InterPro" id="IPR048356">
    <property type="entry name" value="MS_N"/>
</dbReference>
<dbReference type="InterPro" id="IPR046363">
    <property type="entry name" value="MS_N_TIM-barrel_dom"/>
</dbReference>
<dbReference type="InterPro" id="IPR048357">
    <property type="entry name" value="MSG_insertion"/>
</dbReference>
<dbReference type="NCBIfam" id="TIGR01345">
    <property type="entry name" value="malate_syn_G"/>
    <property type="match status" value="1"/>
</dbReference>
<dbReference type="NCBIfam" id="NF002825">
    <property type="entry name" value="PRK02999.1"/>
    <property type="match status" value="1"/>
</dbReference>
<dbReference type="PANTHER" id="PTHR42739">
    <property type="entry name" value="MALATE SYNTHASE G"/>
    <property type="match status" value="1"/>
</dbReference>
<dbReference type="PANTHER" id="PTHR42739:SF1">
    <property type="entry name" value="MALATE SYNTHASE G"/>
    <property type="match status" value="1"/>
</dbReference>
<dbReference type="Pfam" id="PF20659">
    <property type="entry name" value="MS_C"/>
    <property type="match status" value="1"/>
</dbReference>
<dbReference type="Pfam" id="PF20656">
    <property type="entry name" value="MS_N"/>
    <property type="match status" value="1"/>
</dbReference>
<dbReference type="Pfam" id="PF01274">
    <property type="entry name" value="MS_TIM-barrel"/>
    <property type="match status" value="1"/>
</dbReference>
<dbReference type="Pfam" id="PF20658">
    <property type="entry name" value="MSG_insertion"/>
    <property type="match status" value="1"/>
</dbReference>
<dbReference type="SUPFAM" id="SSF51645">
    <property type="entry name" value="Malate synthase G"/>
    <property type="match status" value="1"/>
</dbReference>
<comment type="function">
    <text evidence="1">Involved in the glycolate utilization. Catalyzes the condensation and subsequent hydrolysis of acetyl-coenzyme A (acetyl-CoA) and glyoxylate to form malate and CoA.</text>
</comment>
<comment type="catalytic activity">
    <reaction evidence="1">
        <text>glyoxylate + acetyl-CoA + H2O = (S)-malate + CoA + H(+)</text>
        <dbReference type="Rhea" id="RHEA:18181"/>
        <dbReference type="ChEBI" id="CHEBI:15377"/>
        <dbReference type="ChEBI" id="CHEBI:15378"/>
        <dbReference type="ChEBI" id="CHEBI:15589"/>
        <dbReference type="ChEBI" id="CHEBI:36655"/>
        <dbReference type="ChEBI" id="CHEBI:57287"/>
        <dbReference type="ChEBI" id="CHEBI:57288"/>
        <dbReference type="EC" id="2.3.3.9"/>
    </reaction>
</comment>
<comment type="cofactor">
    <cofactor evidence="1">
        <name>Mg(2+)</name>
        <dbReference type="ChEBI" id="CHEBI:18420"/>
    </cofactor>
</comment>
<comment type="pathway">
    <text evidence="1">Carbohydrate metabolism; glyoxylate cycle; (S)-malate from isocitrate: step 2/2.</text>
</comment>
<comment type="subunit">
    <text evidence="1">Monomer.</text>
</comment>
<comment type="subcellular location">
    <subcellularLocation>
        <location evidence="1">Cytoplasm</location>
    </subcellularLocation>
</comment>
<comment type="similarity">
    <text evidence="1">Belongs to the malate synthase family. GlcB subfamily.</text>
</comment>
<accession>Q9KB03</accession>
<name>MASZ_HALH5</name>
<feature type="chain" id="PRO_0000166880" description="Malate synthase G">
    <location>
        <begin position="1"/>
        <end position="727"/>
    </location>
</feature>
<feature type="active site" description="Proton acceptor" evidence="1">
    <location>
        <position position="339"/>
    </location>
</feature>
<feature type="active site" description="Proton donor" evidence="1">
    <location>
        <position position="630"/>
    </location>
</feature>
<feature type="binding site" evidence="1">
    <location>
        <position position="117"/>
    </location>
    <ligand>
        <name>acetyl-CoA</name>
        <dbReference type="ChEBI" id="CHEBI:57288"/>
    </ligand>
</feature>
<feature type="binding site" evidence="1">
    <location>
        <begin position="124"/>
        <end position="125"/>
    </location>
    <ligand>
        <name>acetyl-CoA</name>
        <dbReference type="ChEBI" id="CHEBI:57288"/>
    </ligand>
</feature>
<feature type="binding site" evidence="1">
    <location>
        <position position="275"/>
    </location>
    <ligand>
        <name>acetyl-CoA</name>
        <dbReference type="ChEBI" id="CHEBI:57288"/>
    </ligand>
</feature>
<feature type="binding site" evidence="1">
    <location>
        <position position="312"/>
    </location>
    <ligand>
        <name>acetyl-CoA</name>
        <dbReference type="ChEBI" id="CHEBI:57288"/>
    </ligand>
</feature>
<feature type="binding site" evidence="1">
    <location>
        <position position="339"/>
    </location>
    <ligand>
        <name>glyoxylate</name>
        <dbReference type="ChEBI" id="CHEBI:36655"/>
    </ligand>
</feature>
<feature type="binding site" evidence="1">
    <location>
        <position position="431"/>
    </location>
    <ligand>
        <name>glyoxylate</name>
        <dbReference type="ChEBI" id="CHEBI:36655"/>
    </ligand>
</feature>
<feature type="binding site" evidence="1">
    <location>
        <position position="431"/>
    </location>
    <ligand>
        <name>Mg(2+)</name>
        <dbReference type="ChEBI" id="CHEBI:18420"/>
    </ligand>
</feature>
<feature type="binding site" evidence="1">
    <location>
        <begin position="456"/>
        <end position="459"/>
    </location>
    <ligand>
        <name>glyoxylate</name>
        <dbReference type="ChEBI" id="CHEBI:36655"/>
    </ligand>
</feature>
<feature type="binding site" evidence="1">
    <location>
        <position position="459"/>
    </location>
    <ligand>
        <name>Mg(2+)</name>
        <dbReference type="ChEBI" id="CHEBI:18420"/>
    </ligand>
</feature>
<feature type="binding site" evidence="1">
    <location>
        <position position="540"/>
    </location>
    <ligand>
        <name>acetyl-CoA</name>
        <dbReference type="ChEBI" id="CHEBI:57288"/>
    </ligand>
</feature>
<feature type="modified residue" description="Cysteine sulfenic acid (-SOH)" evidence="1">
    <location>
        <position position="616"/>
    </location>
</feature>
<reference key="1">
    <citation type="journal article" date="2000" name="Nucleic Acids Res.">
        <title>Complete genome sequence of the alkaliphilic bacterium Bacillus halodurans and genomic sequence comparison with Bacillus subtilis.</title>
        <authorList>
            <person name="Takami H."/>
            <person name="Nakasone K."/>
            <person name="Takaki Y."/>
            <person name="Maeno G."/>
            <person name="Sasaki R."/>
            <person name="Masui N."/>
            <person name="Fuji F."/>
            <person name="Hirama C."/>
            <person name="Nakamura Y."/>
            <person name="Ogasawara N."/>
            <person name="Kuhara S."/>
            <person name="Horikoshi K."/>
        </authorList>
    </citation>
    <scope>NUCLEOTIDE SEQUENCE [LARGE SCALE GENOMIC DNA]</scope>
    <source>
        <strain>ATCC BAA-125 / DSM 18197 / FERM 7344 / JCM 9153 / C-125</strain>
    </source>
</reference>
<protein>
    <recommendedName>
        <fullName evidence="1">Malate synthase G</fullName>
        <ecNumber evidence="1">2.3.3.9</ecNumber>
    </recommendedName>
</protein>
<evidence type="ECO:0000255" key="1">
    <source>
        <dbReference type="HAMAP-Rule" id="MF_00641"/>
    </source>
</evidence>
<gene>
    <name evidence="1" type="primary">glcB</name>
    <name type="ordered locus">BH2133</name>
</gene>
<organism>
    <name type="scientific">Halalkalibacterium halodurans (strain ATCC BAA-125 / DSM 18197 / FERM 7344 / JCM 9153 / C-125)</name>
    <name type="common">Bacillus halodurans</name>
    <dbReference type="NCBI Taxonomy" id="272558"/>
    <lineage>
        <taxon>Bacteria</taxon>
        <taxon>Bacillati</taxon>
        <taxon>Bacillota</taxon>
        <taxon>Bacilli</taxon>
        <taxon>Bacillales</taxon>
        <taxon>Bacillaceae</taxon>
        <taxon>Halalkalibacterium (ex Joshi et al. 2022)</taxon>
    </lineage>
</organism>